<reference key="1">
    <citation type="journal article" date="2006" name="Proc. Natl. Acad. Sci. U.S.A.">
        <title>Genomic analysis of the uncultivated marine crenarchaeote Cenarchaeum symbiosum.</title>
        <authorList>
            <person name="Hallam S.J."/>
            <person name="Konstantinidis K.T."/>
            <person name="Putnam N."/>
            <person name="Schleper C."/>
            <person name="Watanabe Y."/>
            <person name="Sugahara J."/>
            <person name="Preston C."/>
            <person name="de la Torre J."/>
            <person name="Richardson P.M."/>
            <person name="DeLong E.F."/>
        </authorList>
    </citation>
    <scope>NUCLEOTIDE SEQUENCE [LARGE SCALE GENOMIC DNA]</scope>
    <source>
        <strain>A</strain>
    </source>
</reference>
<reference key="2">
    <citation type="journal article" date="2010" name="Nature">
        <title>Fructose 1,6-bisphosphate aldolase/phosphatase may be an ancestral gluconeogenic enzyme.</title>
        <authorList>
            <person name="Say R.F."/>
            <person name="Fuchs G."/>
        </authorList>
    </citation>
    <scope>FUNCTION AS BOTH FBPASE AND FBP ALDOLASE</scope>
    <scope>CATALYTIC ACTIVITY</scope>
    <scope>COFACTOR</scope>
    <scope>BIOPHYSICOCHEMICAL PROPERTIES</scope>
    <scope>PATHWAY</scope>
    <scope>MUTAGENESIS OF LYS-227 AND TYR-342</scope>
    <scope>ACTIVE SITE</scope>
    <scope>SCHIFF BASE FORMATION WITH DHAP</scope>
    <source>
        <strain>A</strain>
    </source>
</reference>
<reference key="3">
    <citation type="journal article" date="2011" name="Nature">
        <title>Active-site remodelling in the bifunctional fructose-1,6-bisphosphate aldolase/phosphatase.</title>
        <authorList>
            <person name="Du J."/>
            <person name="Say R.F."/>
            <person name="Lu W."/>
            <person name="Fuchs G."/>
            <person name="Einsle O."/>
        </authorList>
    </citation>
    <scope>MUTAGENESIS OF TYR-224; LYS-227; ASP-228; GLU-341 AND TYR-342</scope>
    <scope>ACTIVE SITE</scope>
</reference>
<name>FBPAP_CENSY</name>
<sequence length="376" mass="41145">MRITVSAIKADVGGIGGHTLPSSGLLDAVRRKVSSSSLLIDHYIGYCGDDVHIVMTHTRGTDNSDIHKLAWDAFMEGTRVAKEEGLYGAGQDLLRDSFSGNVKGMGPGVAELEFEERANEAFTVFAADKTEPGAFNYPFYRMFVDSLSNTGLIVNKSLAEGVVINIMDVSKARTARLVLWEDKPTIEAALMYPGRFVVSSVETRDGEPIASASTDRLHNIAGTYVGKDDPICLVRTQKRFPATEEAGSCFNNPHYVAGNTRGSHHMPLMPVRLNSPASINFCIPIVEALVFSMHEGRLTGPFDGFSTPDWDDVRRTATRRAHAMRRQGFVHPATLVPDELEYAEGYRSRMDVLDSKMVPLKDSGPAGTGRAYEDPD</sequence>
<keyword id="KW-0119">Carbohydrate metabolism</keyword>
<keyword id="KW-0312">Gluconeogenesis</keyword>
<keyword id="KW-0378">Hydrolase</keyword>
<keyword id="KW-0456">Lyase</keyword>
<keyword id="KW-0460">Magnesium</keyword>
<keyword id="KW-0479">Metal-binding</keyword>
<keyword id="KW-0560">Oxidoreductase</keyword>
<keyword id="KW-1185">Reference proteome</keyword>
<keyword id="KW-0704">Schiff base</keyword>
<accession>A0RV30</accession>
<feature type="chain" id="PRO_0000437179" description="Fructose-1,6-bisphosphate aldolase/phosphatase">
    <location>
        <begin position="1"/>
        <end position="376"/>
    </location>
</feature>
<feature type="region of interest" description="Disordered" evidence="3">
    <location>
        <begin position="357"/>
        <end position="376"/>
    </location>
</feature>
<feature type="active site" description="Proton acceptor; for FBP phosphatase activity" evidence="1">
    <location>
        <position position="11"/>
    </location>
</feature>
<feature type="active site" description="Proton donor/acceptor; for FBP aldolase activity" evidence="9">
    <location>
        <position position="224"/>
    </location>
</feature>
<feature type="active site" description="Schiff-base intermediate with DHAP; for FBP aldolase activity" evidence="4">
    <location>
        <position position="227"/>
    </location>
</feature>
<feature type="binding site" evidence="1">
    <location>
        <position position="11"/>
    </location>
    <ligand>
        <name>Mg(2+)</name>
        <dbReference type="ChEBI" id="CHEBI:18420"/>
        <label>1</label>
    </ligand>
</feature>
<feature type="binding site" description="in other chain" evidence="1">
    <location>
        <position position="18"/>
    </location>
    <ligand>
        <name>beta-D-fructose 1,6-bisphosphate</name>
        <dbReference type="ChEBI" id="CHEBI:32966"/>
        <note>ligand shared between dimeric partners</note>
    </ligand>
</feature>
<feature type="binding site" evidence="1">
    <location>
        <position position="18"/>
    </location>
    <ligand>
        <name>dihydroxyacetone phosphate</name>
        <dbReference type="ChEBI" id="CHEBI:57642"/>
    </ligand>
</feature>
<feature type="binding site" evidence="1">
    <location>
        <position position="18"/>
    </location>
    <ligand>
        <name>Mg(2+)</name>
        <dbReference type="ChEBI" id="CHEBI:18420"/>
        <label>1</label>
    </ligand>
</feature>
<feature type="binding site" evidence="1">
    <location>
        <position position="49"/>
    </location>
    <ligand>
        <name>Mg(2+)</name>
        <dbReference type="ChEBI" id="CHEBI:18420"/>
        <label>1</label>
    </ligand>
</feature>
<feature type="binding site" evidence="1">
    <location>
        <position position="49"/>
    </location>
    <ligand>
        <name>Mg(2+)</name>
        <dbReference type="ChEBI" id="CHEBI:18420"/>
        <label>2</label>
    </ligand>
</feature>
<feature type="binding site" evidence="1">
    <location>
        <position position="50"/>
    </location>
    <ligand>
        <name>Mg(2+)</name>
        <dbReference type="ChEBI" id="CHEBI:18420"/>
        <label>2</label>
    </ligand>
</feature>
<feature type="binding site" description="in other chain" evidence="1">
    <location>
        <position position="87"/>
    </location>
    <ligand>
        <name>beta-D-fructose 1,6-bisphosphate</name>
        <dbReference type="ChEBI" id="CHEBI:32966"/>
        <note>ligand shared between dimeric partners</note>
    </ligand>
</feature>
<feature type="binding site" evidence="1">
    <location>
        <position position="91"/>
    </location>
    <ligand>
        <name>Mg(2+)</name>
        <dbReference type="ChEBI" id="CHEBI:18420"/>
        <label>1</label>
    </ligand>
</feature>
<feature type="binding site" description="in other chain" evidence="1">
    <location>
        <begin position="100"/>
        <end position="101"/>
    </location>
    <ligand>
        <name>beta-D-fructose 1,6-bisphosphate</name>
        <dbReference type="ChEBI" id="CHEBI:32966"/>
        <note>ligand shared between dimeric partners</note>
    </ligand>
</feature>
<feature type="binding site" evidence="1">
    <location>
        <position position="128"/>
    </location>
    <ligand>
        <name>Mg(2+)</name>
        <dbReference type="ChEBI" id="CHEBI:18420"/>
        <label>2</label>
    </ligand>
</feature>
<feature type="binding site" description="in other chain" evidence="1">
    <location>
        <position position="129"/>
    </location>
    <ligand>
        <name>beta-D-fructose 1,6-bisphosphate</name>
        <dbReference type="ChEBI" id="CHEBI:32966"/>
        <note>ligand shared between dimeric partners</note>
    </ligand>
</feature>
<feature type="binding site" evidence="1">
    <location>
        <position position="129"/>
    </location>
    <ligand>
        <name>dihydroxyacetone phosphate</name>
        <dbReference type="ChEBI" id="CHEBI:57642"/>
    </ligand>
</feature>
<feature type="binding site" evidence="1">
    <location>
        <position position="227"/>
    </location>
    <ligand>
        <name>Mg(2+)</name>
        <dbReference type="ChEBI" id="CHEBI:18420"/>
        <label>3</label>
    </ligand>
</feature>
<feature type="binding site" evidence="1">
    <location>
        <position position="228"/>
    </location>
    <ligand>
        <name>Mg(2+)</name>
        <dbReference type="ChEBI" id="CHEBI:18420"/>
        <label>3</label>
    </ligand>
</feature>
<feature type="binding site" evidence="1">
    <location>
        <position position="228"/>
    </location>
    <ligand>
        <name>Mg(2+)</name>
        <dbReference type="ChEBI" id="CHEBI:18420"/>
        <label>4</label>
    </ligand>
</feature>
<feature type="binding site" evidence="1">
    <location>
        <position position="229"/>
    </location>
    <ligand>
        <name>Mg(2+)</name>
        <dbReference type="ChEBI" id="CHEBI:18420"/>
        <label>2</label>
    </ligand>
</feature>
<feature type="binding site" evidence="1">
    <location>
        <position position="229"/>
    </location>
    <ligand>
        <name>Mg(2+)</name>
        <dbReference type="ChEBI" id="CHEBI:18420"/>
        <label>3</label>
    </ligand>
</feature>
<feature type="binding site" evidence="1">
    <location>
        <begin position="237"/>
        <end position="238"/>
    </location>
    <ligand>
        <name>beta-D-fructose 1,6-bisphosphate</name>
        <dbReference type="ChEBI" id="CHEBI:32966"/>
        <note>ligand shared between dimeric partners</note>
    </ligand>
</feature>
<feature type="binding site" description="in other chain" evidence="1">
    <location>
        <position position="261"/>
    </location>
    <ligand>
        <name>beta-D-fructose 1,6-bisphosphate</name>
        <dbReference type="ChEBI" id="CHEBI:32966"/>
        <note>ligand shared between dimeric partners</note>
    </ligand>
</feature>
<feature type="binding site" evidence="1">
    <location>
        <position position="261"/>
    </location>
    <ligand>
        <name>dihydroxyacetone phosphate</name>
        <dbReference type="ChEBI" id="CHEBI:57642"/>
    </ligand>
</feature>
<feature type="binding site" description="in other chain" evidence="1">
    <location>
        <position position="342"/>
    </location>
    <ligand>
        <name>beta-D-fructose 1,6-bisphosphate</name>
        <dbReference type="ChEBI" id="CHEBI:32966"/>
        <note>ligand shared between dimeric partners</note>
    </ligand>
</feature>
<feature type="mutagenesis site" description="Shows slightly decreased FBP phosphatase activity, whereas FBP aldolase activity is nearly completely abolished." evidence="5">
    <original>Y</original>
    <variation>F</variation>
    <location>
        <position position="224"/>
    </location>
</feature>
<feature type="mutagenesis site" description="Shows enhanced FBP phosphatase activity, whereas FBP aldolase activity is completely abolished." evidence="4 5">
    <original>K</original>
    <variation>R</variation>
    <location>
        <position position="227"/>
    </location>
</feature>
<feature type="mutagenesis site" description="Shows completely abolition of both FBP aldolase and FBP phosphatase activities." evidence="5">
    <original>D</original>
    <variation>N</variation>
    <location>
        <position position="228"/>
    </location>
</feature>
<feature type="mutagenesis site" description="Shows unaltered FBP aldolase activity, whereas FBP phosphatase activity is completely abolished." evidence="5">
    <original>E</original>
    <variation>Q</variation>
    <location>
        <position position="341"/>
    </location>
</feature>
<feature type="mutagenesis site" description="Shows unaltered FBP aldolase activity, whereas FBP phosphatase activity is completely abolished." evidence="4 5">
    <original>Y</original>
    <variation>F</variation>
    <location>
        <position position="342"/>
    </location>
</feature>
<evidence type="ECO:0000250" key="1">
    <source>
        <dbReference type="UniProtKB" id="F9VMT6"/>
    </source>
</evidence>
<evidence type="ECO:0000255" key="2">
    <source>
        <dbReference type="HAMAP-Rule" id="MF_02067"/>
    </source>
</evidence>
<evidence type="ECO:0000256" key="3">
    <source>
        <dbReference type="SAM" id="MobiDB-lite"/>
    </source>
</evidence>
<evidence type="ECO:0000269" key="4">
    <source>
    </source>
</evidence>
<evidence type="ECO:0000269" key="5">
    <source>
    </source>
</evidence>
<evidence type="ECO:0000303" key="6">
    <source>
    </source>
</evidence>
<evidence type="ECO:0000305" key="7"/>
<evidence type="ECO:0000305" key="8">
    <source>
    </source>
</evidence>
<evidence type="ECO:0000305" key="9">
    <source>
    </source>
</evidence>
<evidence type="ECO:0000312" key="10">
    <source>
        <dbReference type="EMBL" id="ABK77197.1"/>
    </source>
</evidence>
<organism>
    <name type="scientific">Cenarchaeum symbiosum (strain A)</name>
    <dbReference type="NCBI Taxonomy" id="414004"/>
    <lineage>
        <taxon>Archaea</taxon>
        <taxon>Nitrososphaerota</taxon>
        <taxon>Candidatus Cenarchaeales</taxon>
        <taxon>Candidatus Cenarchaeaceae</taxon>
        <taxon>Candidatus Cenarchaeum</taxon>
    </lineage>
</organism>
<dbReference type="EC" id="3.1.3.11" evidence="4"/>
<dbReference type="EC" id="4.1.2.13" evidence="4"/>
<dbReference type="EMBL" id="DP000238">
    <property type="protein sequence ID" value="ABK77197.1"/>
    <property type="status" value="ALT_INIT"/>
    <property type="molecule type" value="Genomic_DNA"/>
</dbReference>
<dbReference type="SMR" id="A0RV30"/>
<dbReference type="STRING" id="414004.CENSYa_0564"/>
<dbReference type="EnsemblBacteria" id="ABK77197">
    <property type="protein sequence ID" value="ABK77197"/>
    <property type="gene ID" value="CENSYa_0564"/>
</dbReference>
<dbReference type="KEGG" id="csy:CENSYa_0564"/>
<dbReference type="PATRIC" id="fig|414004.10.peg.513"/>
<dbReference type="HOGENOM" id="CLU_041630_0_0_2"/>
<dbReference type="UniPathway" id="UPA00138"/>
<dbReference type="Proteomes" id="UP000000758">
    <property type="component" value="Chromosome"/>
</dbReference>
<dbReference type="GO" id="GO:0042132">
    <property type="term" value="F:fructose 1,6-bisphosphate 1-phosphatase activity"/>
    <property type="evidence" value="ECO:0007669"/>
    <property type="project" value="UniProtKB-UniRule"/>
</dbReference>
<dbReference type="GO" id="GO:0004332">
    <property type="term" value="F:fructose-bisphosphate aldolase activity"/>
    <property type="evidence" value="ECO:0007669"/>
    <property type="project" value="UniProtKB-UniRule"/>
</dbReference>
<dbReference type="GO" id="GO:0000287">
    <property type="term" value="F:magnesium ion binding"/>
    <property type="evidence" value="ECO:0007669"/>
    <property type="project" value="UniProtKB-UniRule"/>
</dbReference>
<dbReference type="GO" id="GO:0016491">
    <property type="term" value="F:oxidoreductase activity"/>
    <property type="evidence" value="ECO:0007669"/>
    <property type="project" value="UniProtKB-KW"/>
</dbReference>
<dbReference type="GO" id="GO:0006094">
    <property type="term" value="P:gluconeogenesis"/>
    <property type="evidence" value="ECO:0007669"/>
    <property type="project" value="UniProtKB-UniRule"/>
</dbReference>
<dbReference type="HAMAP" id="MF_02067">
    <property type="entry name" value="FBP_aldolase_phosphatase"/>
    <property type="match status" value="1"/>
</dbReference>
<dbReference type="InterPro" id="IPR002803">
    <property type="entry name" value="FBPase_V"/>
</dbReference>
<dbReference type="InterPro" id="IPR036076">
    <property type="entry name" value="FBPase_V_sf"/>
</dbReference>
<dbReference type="NCBIfam" id="NF041126">
    <property type="entry name" value="FBP_aldo_phos"/>
    <property type="match status" value="1"/>
</dbReference>
<dbReference type="PANTHER" id="PTHR38341">
    <property type="entry name" value="FRUCTOSE-1,6-BISPHOSPHATE ALDOLASE/PHOSPHATASE"/>
    <property type="match status" value="1"/>
</dbReference>
<dbReference type="PANTHER" id="PTHR38341:SF1">
    <property type="entry name" value="FRUCTOSE-1,6-BISPHOSPHATE ALDOLASE_PHOSPHATASE"/>
    <property type="match status" value="1"/>
</dbReference>
<dbReference type="Pfam" id="PF01950">
    <property type="entry name" value="FBPase_3"/>
    <property type="match status" value="1"/>
</dbReference>
<dbReference type="PIRSF" id="PIRSF015647">
    <property type="entry name" value="FBPtase_archl"/>
    <property type="match status" value="1"/>
</dbReference>
<dbReference type="SUPFAM" id="SSF111249">
    <property type="entry name" value="Sulfolobus fructose-1,6-bisphosphatase-like"/>
    <property type="match status" value="1"/>
</dbReference>
<comment type="function">
    <text evidence="4">Catalyzes two subsequent steps in gluconeogenesis: the aldol condensation of dihydroxyacetone phosphate (DHAP) and glyceraldehyde-3-phosphate (GA3P) to fructose-1,6-bisphosphate (FBP), and the dephosphorylation of FBP to fructose-6-phosphate (F6P).</text>
</comment>
<comment type="catalytic activity">
    <reaction evidence="4">
        <text>beta-D-fructose 1,6-bisphosphate + H2O = beta-D-fructose 6-phosphate + phosphate</text>
        <dbReference type="Rhea" id="RHEA:11064"/>
        <dbReference type="ChEBI" id="CHEBI:15377"/>
        <dbReference type="ChEBI" id="CHEBI:32966"/>
        <dbReference type="ChEBI" id="CHEBI:43474"/>
        <dbReference type="ChEBI" id="CHEBI:57634"/>
        <dbReference type="EC" id="3.1.3.11"/>
    </reaction>
</comment>
<comment type="catalytic activity">
    <reaction evidence="4">
        <text>beta-D-fructose 1,6-bisphosphate = D-glyceraldehyde 3-phosphate + dihydroxyacetone phosphate</text>
        <dbReference type="Rhea" id="RHEA:14729"/>
        <dbReference type="ChEBI" id="CHEBI:32966"/>
        <dbReference type="ChEBI" id="CHEBI:57642"/>
        <dbReference type="ChEBI" id="CHEBI:59776"/>
        <dbReference type="EC" id="4.1.2.13"/>
    </reaction>
</comment>
<comment type="cofactor">
    <cofactor evidence="4">
        <name>Mg(2+)</name>
        <dbReference type="ChEBI" id="CHEBI:18420"/>
    </cofactor>
</comment>
<comment type="biophysicochemical properties">
    <kinetics>
        <KM evidence="4">40 uM for D-fructose 1,6-bisphosphate (when assaying the FBP phosphatase activity, at 48 degrees Celsius)</KM>
        <KM evidence="4">110 uM for triosephosphates (when assaying the FBP aldolase activity in the anabolic direction, at 48 degrees Celsius)</KM>
        <KM evidence="4">100 mM for D-fructose 1,6-bisphosphate (when assaying the FBP aldolase activity in the catabolic direction, at 48 degrees Celsius)</KM>
        <Vmax evidence="4">0.22 umol/min/mg enzyme for the FBP phosphatase activity (at 48 degrees Celsius)</Vmax>
        <Vmax evidence="4">0.24 umol/min/mg enzyme for the FBP aldolase activity in the anabolic direction (at 48 degrees Celsius)</Vmax>
        <Vmax evidence="4">0.29 umol/min/mg enzyme for the FBP aldolase activity in the catabolic direction (at 48 degrees Celsius)</Vmax>
        <text evidence="4">The aldolase reaction is a classic case for a fully reversible enzymatic reaction but here, the KM values for the substrate for the aldol condensation and the aldol cleavage differ by a factor of 1000, and the intrinsic phosphatase activity renders the process irreversible.</text>
    </kinetics>
    <temperatureDependence>
        <text evidence="4">Heat-stabile at 70 degrees Celsius. Displays a half-life of 20 minutes at 82 degrees Celsius.</text>
    </temperatureDependence>
</comment>
<comment type="pathway">
    <text evidence="8">Carbohydrate biosynthesis; gluconeogenesis.</text>
</comment>
<comment type="subunit">
    <text evidence="1">Homooctamer; dimer of tetramers.</text>
</comment>
<comment type="domain">
    <text evidence="1">Consists of a single catalytic domain, but remoldels its active-site architecture via a large structural change to exhibit dual activities.</text>
</comment>
<comment type="similarity">
    <text evidence="2 7">Belongs to the FBP aldolase/phosphatase family.</text>
</comment>
<comment type="sequence caution" evidence="8">
    <conflict type="erroneous initiation">
        <sequence resource="EMBL-CDS" id="ABK77197"/>
    </conflict>
    <text>Extended N-terminus.</text>
</comment>
<gene>
    <name evidence="2" type="primary">fbp</name>
    <name evidence="10" type="ordered locus">CENSYa_0564</name>
</gene>
<proteinExistence type="evidence at protein level"/>
<protein>
    <recommendedName>
        <fullName evidence="6">Fructose-1,6-bisphosphate aldolase/phosphatase</fullName>
        <shortName evidence="2">FBP A/P</shortName>
        <shortName evidence="6">FBP aldolase/phosphatase</shortName>
        <ecNumber evidence="4">3.1.3.11</ecNumber>
        <ecNumber evidence="4">4.1.2.13</ecNumber>
    </recommendedName>
</protein>